<dbReference type="EMBL" id="AF393838">
    <property type="protein sequence ID" value="AAK84020.1"/>
    <property type="molecule type" value="Genomic_DNA"/>
</dbReference>
<dbReference type="EMBL" id="AE005176">
    <property type="protein sequence ID" value="AAK05861.1"/>
    <property type="molecule type" value="Genomic_DNA"/>
</dbReference>
<dbReference type="EMBL" id="AB072443">
    <property type="protein sequence ID" value="BAB69472.1"/>
    <property type="molecule type" value="Genomic_DNA"/>
</dbReference>
<dbReference type="PIR" id="C86845">
    <property type="entry name" value="C86845"/>
</dbReference>
<dbReference type="RefSeq" id="NP_267919.1">
    <property type="nucleotide sequence ID" value="NC_002662.1"/>
</dbReference>
<dbReference type="RefSeq" id="WP_004255278.1">
    <property type="nucleotide sequence ID" value="NC_002662.1"/>
</dbReference>
<dbReference type="SMR" id="Q9CES1"/>
<dbReference type="PaxDb" id="272623-L5953"/>
<dbReference type="EnsemblBacteria" id="AAK05861">
    <property type="protein sequence ID" value="AAK05861"/>
    <property type="gene ID" value="L5953"/>
</dbReference>
<dbReference type="KEGG" id="lla:L5953"/>
<dbReference type="PATRIC" id="fig|272623.7.peg.1889"/>
<dbReference type="eggNOG" id="COG0355">
    <property type="taxonomic scope" value="Bacteria"/>
</dbReference>
<dbReference type="HOGENOM" id="CLU_084338_1_0_9"/>
<dbReference type="OrthoDB" id="9804110at2"/>
<dbReference type="Proteomes" id="UP000002196">
    <property type="component" value="Chromosome"/>
</dbReference>
<dbReference type="GO" id="GO:0005886">
    <property type="term" value="C:plasma membrane"/>
    <property type="evidence" value="ECO:0007669"/>
    <property type="project" value="UniProtKB-SubCell"/>
</dbReference>
<dbReference type="GO" id="GO:0045259">
    <property type="term" value="C:proton-transporting ATP synthase complex"/>
    <property type="evidence" value="ECO:0007669"/>
    <property type="project" value="UniProtKB-KW"/>
</dbReference>
<dbReference type="GO" id="GO:0005524">
    <property type="term" value="F:ATP binding"/>
    <property type="evidence" value="ECO:0007669"/>
    <property type="project" value="UniProtKB-UniRule"/>
</dbReference>
<dbReference type="GO" id="GO:0046933">
    <property type="term" value="F:proton-transporting ATP synthase activity, rotational mechanism"/>
    <property type="evidence" value="ECO:0007669"/>
    <property type="project" value="UniProtKB-UniRule"/>
</dbReference>
<dbReference type="CDD" id="cd12152">
    <property type="entry name" value="F1-ATPase_delta"/>
    <property type="match status" value="1"/>
</dbReference>
<dbReference type="Gene3D" id="1.20.5.440">
    <property type="entry name" value="ATP synthase delta/epsilon subunit, C-terminal domain"/>
    <property type="match status" value="1"/>
</dbReference>
<dbReference type="Gene3D" id="2.60.15.10">
    <property type="entry name" value="F0F1 ATP synthase delta/epsilon subunit, N-terminal"/>
    <property type="match status" value="1"/>
</dbReference>
<dbReference type="HAMAP" id="MF_00530">
    <property type="entry name" value="ATP_synth_epsil_bac"/>
    <property type="match status" value="1"/>
</dbReference>
<dbReference type="InterPro" id="IPR001469">
    <property type="entry name" value="ATP_synth_F1_dsu/esu"/>
</dbReference>
<dbReference type="InterPro" id="IPR020546">
    <property type="entry name" value="ATP_synth_F1_dsu/esu_N"/>
</dbReference>
<dbReference type="InterPro" id="IPR020547">
    <property type="entry name" value="ATP_synth_F1_esu_C"/>
</dbReference>
<dbReference type="InterPro" id="IPR036771">
    <property type="entry name" value="ATPsynth_dsu/esu_N"/>
</dbReference>
<dbReference type="NCBIfam" id="TIGR01216">
    <property type="entry name" value="ATP_synt_epsi"/>
    <property type="match status" value="1"/>
</dbReference>
<dbReference type="NCBIfam" id="NF001846">
    <property type="entry name" value="PRK00571.1-3"/>
    <property type="match status" value="1"/>
</dbReference>
<dbReference type="PANTHER" id="PTHR13822">
    <property type="entry name" value="ATP SYNTHASE DELTA/EPSILON CHAIN"/>
    <property type="match status" value="1"/>
</dbReference>
<dbReference type="PANTHER" id="PTHR13822:SF10">
    <property type="entry name" value="ATP SYNTHASE EPSILON CHAIN, CHLOROPLASTIC"/>
    <property type="match status" value="1"/>
</dbReference>
<dbReference type="Pfam" id="PF00401">
    <property type="entry name" value="ATP-synt_DE"/>
    <property type="match status" value="1"/>
</dbReference>
<dbReference type="Pfam" id="PF02823">
    <property type="entry name" value="ATP-synt_DE_N"/>
    <property type="match status" value="1"/>
</dbReference>
<dbReference type="SUPFAM" id="SSF51344">
    <property type="entry name" value="Epsilon subunit of F1F0-ATP synthase N-terminal domain"/>
    <property type="match status" value="1"/>
</dbReference>
<evidence type="ECO:0000255" key="1">
    <source>
        <dbReference type="HAMAP-Rule" id="MF_00530"/>
    </source>
</evidence>
<evidence type="ECO:0000305" key="2"/>
<proteinExistence type="inferred from homology"/>
<protein>
    <recommendedName>
        <fullName evidence="1">ATP synthase epsilon chain</fullName>
    </recommendedName>
    <alternativeName>
        <fullName evidence="1">ATP synthase F1 sector epsilon subunit</fullName>
    </alternativeName>
    <alternativeName>
        <fullName evidence="1">F-ATPase epsilon subunit</fullName>
    </alternativeName>
</protein>
<reference key="1">
    <citation type="submission" date="2001-06" db="EMBL/GenBank/DDBJ databases">
        <title>Sequence of the atp operon from Lactococcus lactis subsp. lactis CHCC373.</title>
        <authorList>
            <person name="Pedersen M.B."/>
            <person name="Kragelund L."/>
            <person name="Jensen P.R."/>
            <person name="Nilsson D."/>
        </authorList>
    </citation>
    <scope>NUCLEOTIDE SEQUENCE [GENOMIC DNA]</scope>
    <source>
        <strain>CHCC373</strain>
    </source>
</reference>
<reference key="2">
    <citation type="journal article" date="2001" name="Genome Res.">
        <title>The complete genome sequence of the lactic acid bacterium Lactococcus lactis ssp. lactis IL1403.</title>
        <authorList>
            <person name="Bolotin A."/>
            <person name="Wincker P."/>
            <person name="Mauger S."/>
            <person name="Jaillon O."/>
            <person name="Malarme K."/>
            <person name="Weissenbach J."/>
            <person name="Ehrlich S.D."/>
            <person name="Sorokin A."/>
        </authorList>
    </citation>
    <scope>NUCLEOTIDE SEQUENCE [LARGE SCALE GENOMIC DNA]</scope>
    <source>
        <strain>IL1403</strain>
    </source>
</reference>
<reference key="3">
    <citation type="submission" date="2001-10" db="EMBL/GenBank/DDBJ databases">
        <title>Lactococcus lactis subsp. lactis C2 H+-ATPase operon.</title>
        <authorList>
            <person name="Ishikawa K."/>
            <person name="Fujii R."/>
            <person name="Tomita F."/>
            <person name="Yokota A."/>
        </authorList>
    </citation>
    <scope>NUCLEOTIDE SEQUENCE [GENOMIC DNA]</scope>
    <source>
        <strain>C2</strain>
    </source>
</reference>
<feature type="chain" id="PRO_0000188147" description="ATP synthase epsilon chain">
    <location>
        <begin position="1"/>
        <end position="141"/>
    </location>
</feature>
<feature type="sequence conflict" description="In Ref. 3; BAB69472." evidence="2" ref="3">
    <original>MI</original>
    <variation>VV</variation>
    <location>
        <begin position="16"/>
        <end position="17"/>
    </location>
</feature>
<feature type="sequence conflict" description="In Ref. 3; BAB69472." evidence="2" ref="3">
    <original>A</original>
    <variation>T</variation>
    <location>
        <position position="45"/>
    </location>
</feature>
<feature type="sequence conflict" description="In Ref. 3; BAB69472." evidence="2" ref="3">
    <original>R</original>
    <variation>S</variation>
    <location>
        <position position="55"/>
    </location>
</feature>
<feature type="sequence conflict" description="In Ref. 3; BAB69472." evidence="2" ref="3">
    <original>N</original>
    <variation>K</variation>
    <location>
        <position position="122"/>
    </location>
</feature>
<feature type="sequence conflict" description="In Ref. 3; BAB69472." evidence="2" ref="3">
    <original>A</original>
    <variation>V</variation>
    <location>
        <position position="124"/>
    </location>
</feature>
<feature type="sequence conflict" description="In Ref. 3; BAB69472." evidence="2" ref="3">
    <original>R</original>
    <variation>N</variation>
    <location>
        <position position="141"/>
    </location>
</feature>
<gene>
    <name evidence="1" type="primary">atpC</name>
    <name type="synonym">atpE</name>
    <name type="ordered locus">LL1763</name>
    <name type="ORF">L5953</name>
</gene>
<organism>
    <name type="scientific">Lactococcus lactis subsp. lactis (strain IL1403)</name>
    <name type="common">Streptococcus lactis</name>
    <dbReference type="NCBI Taxonomy" id="272623"/>
    <lineage>
        <taxon>Bacteria</taxon>
        <taxon>Bacillati</taxon>
        <taxon>Bacillota</taxon>
        <taxon>Bacilli</taxon>
        <taxon>Lactobacillales</taxon>
        <taxon>Streptococcaceae</taxon>
        <taxon>Lactococcus</taxon>
    </lineage>
</organism>
<keyword id="KW-0066">ATP synthesis</keyword>
<keyword id="KW-1003">Cell membrane</keyword>
<keyword id="KW-0139">CF(1)</keyword>
<keyword id="KW-0375">Hydrogen ion transport</keyword>
<keyword id="KW-0406">Ion transport</keyword>
<keyword id="KW-0472">Membrane</keyword>
<keyword id="KW-1185">Reference proteome</keyword>
<keyword id="KW-0813">Transport</keyword>
<sequence>MSENVMTLQVITPAGMIYDHHANYITARTTNGEIGILPNMISTIAGLEIDELKVRRPDDETHVDYIAVNGGIIEIKDSLVTIVADSAERNRDIDVSRAERAKIRAEKALEVAKAEKKSDEINRAEVALHRALNRLNVSSHR</sequence>
<accession>Q9CES1</accession>
<comment type="function">
    <text evidence="1">Produces ATP from ADP in the presence of a proton gradient across the membrane.</text>
</comment>
<comment type="subunit">
    <text>F-type ATPases have 2 components, CF(1) - the catalytic core - and CF(0) - the membrane proton channel. CF(1) has five subunits: alpha(3), beta(3), gamma(1), delta(1), epsilon(1). CF(0) has three main subunits: a, b and c.</text>
</comment>
<comment type="subcellular location">
    <subcellularLocation>
        <location evidence="1">Cell membrane</location>
        <topology evidence="1">Peripheral membrane protein</topology>
    </subcellularLocation>
</comment>
<comment type="similarity">
    <text evidence="1">Belongs to the ATPase epsilon chain family.</text>
</comment>
<name>ATPE_LACLA</name>